<name>GP1_SOLLC</name>
<protein>
    <recommendedName>
        <fullName>Polygalacturonase-1 non-catalytic subunit beta</fullName>
    </recommendedName>
    <alternativeName>
        <fullName>AroGP1</fullName>
    </alternativeName>
    <alternativeName>
        <fullName>Polygalacturonase converter</fullName>
        <shortName>PG converter</shortName>
    </alternativeName>
</protein>
<comment type="function">
    <text evidence="4 7">Non-catalytic subunit of the polygalacturonase isozyme 1 (PG1). Necessary and sufficient to convert the polygalacturonase from its monomeric form PG2 to its heterodimeric form PG1. Seems to limit the depolymerization and solubilization of cell wall polyuronides mediated by PG2 during ripening, probably by recruiting PG2 to form PG1.</text>
</comment>
<comment type="subunit">
    <text evidence="4 5 6 8">Interacts with polygalacturonase-2 (isoenzymes PG2A and PG2B) to form heterodimers called polygalacturonase-1 (PG1).</text>
</comment>
<comment type="subcellular location">
    <subcellularLocation>
        <location evidence="3">Secreted</location>
        <location evidence="3">Extracellular space</location>
        <location evidence="3">Apoplast</location>
    </subcellularLocation>
    <subcellularLocation>
        <location evidence="3">Secreted</location>
        <location evidence="3">Cell wall</location>
    </subcellularLocation>
    <text>Associated to the cell wall.</text>
</comment>
<comment type="tissue specificity">
    <text evidence="3 4 5 6 8">Mostly expressed in fruit pericarp. Also detected at low levels in cell wall of roots, leaves and flowers (at protein level).</text>
</comment>
<comment type="developmental stage">
    <text evidence="3 5 7 8">Expressed in ripening fruits from the 20th day after anthesis and increase during the ripening (at protein level).</text>
</comment>
<comment type="induction">
    <text evidence="3">Transiently repressed by ethylene.</text>
</comment>
<reference key="1">
    <citation type="journal article" date="1992" name="Plant Cell">
        <title>The beta subunit of tomato fruit polygalacturonase isoenzyme 1: isolation, characterization, and identification of unique structural features.</title>
        <authorList>
            <person name="Zheng L."/>
            <person name="Heupel R.C."/>
            <person name="DellaPenna D."/>
        </authorList>
    </citation>
    <scope>NUCLEOTIDE SEQUENCE [MRNA]</scope>
    <scope>PROTEIN SEQUENCE OF 109-120; 160-171; 230-236 AND 243-252</scope>
    <scope>PROPEPTIDES</scope>
    <scope>TISSUE SPECIFICITY</scope>
    <scope>DEVELOPMENTAL STAGE</scope>
    <scope>INTERACTION WITH PG POLYPEPTIDES</scope>
    <source>
        <strain>cv. Ailsa Craig</strain>
        <tissue>Fruit</tissue>
    </source>
</reference>
<reference key="2">
    <citation type="submission" date="1996-07" db="EMBL/GenBank/DDBJ databases">
        <title>Gene encoding tomato polygalacturonase 1 (PG1) beta subunit.</title>
        <authorList>
            <person name="Watson C.F."/>
            <person name="Schuchman B."/>
            <person name="Liu J."/>
            <person name="DellaPenna D."/>
        </authorList>
    </citation>
    <scope>NUCLEOTIDE SEQUENCE [GENOMIC DNA]</scope>
    <source>
        <strain>cv. VFNT Cherry</strain>
    </source>
</reference>
<reference key="3">
    <citation type="journal article" date="1984" name="Eur. J. Biochem.">
        <title>Purification and characterization of tomato polygalacturonase converter.</title>
        <authorList>
            <person name="Pressey R."/>
        </authorList>
    </citation>
    <scope>INTERACTION WITH PG2</scope>
    <scope>TISSUE SPECIFICITY</scope>
</reference>
<reference key="4">
    <citation type="journal article" date="1993" name="Planta">
        <title>Accumulation of the beta-subunit of polygalacturonase 1 in normal and mutant tomato fruit.</title>
        <authorList>
            <person name="Pogson B.J."/>
            <person name="Brady C.J."/>
        </authorList>
    </citation>
    <scope>INTERACTION WITH PG2</scope>
    <scope>TISSUE SPECIFICITY</scope>
    <scope>DEVELOPMENTAL STAGE</scope>
</reference>
<reference key="5">
    <citation type="journal article" date="1994" name="Plant Cell">
        <title>Reduction of tomato polygalacturonase beta subunit expression affects pectin solubilization and degradation during fruit ripening.</title>
        <authorList>
            <person name="Watson C.F."/>
            <person name="Zheng L."/>
            <person name="DellaPenna D."/>
        </authorList>
    </citation>
    <scope>FUNCTION</scope>
    <scope>DEVELOPMENTAL STAGE</scope>
</reference>
<reference key="6">
    <citation type="journal article" date="1994" name="Plant Physiol.">
        <title>Differential expression of the two subunits of tomato polygalacturonase isoenzyme 1 in wild-type and in tomato fruit.</title>
        <authorList>
            <person name="Zheng L."/>
            <person name="Watson C.F."/>
            <person name="DellaPenna D."/>
        </authorList>
    </citation>
    <scope>DEVELOPMENTAL STAGE</scope>
    <scope>TISSUE SPECIFICITY</scope>
    <scope>SUBCELLULAR LOCATION</scope>
    <scope>INDUCTION</scope>
</reference>
<reference key="7">
    <citation type="journal article" date="1994" name="Plant Physiol.">
        <title>Tomato fruit polygalacturonase isozyme 1 -- characterization of the beta subunit and its state of assembly in vivo.</title>
        <authorList>
            <person name="Moore T."/>
            <person name="Bennett A.B."/>
        </authorList>
    </citation>
    <scope>FUNCTION</scope>
    <scope>SUBUNIT</scope>
    <scope>TISSUE SPECIFICITY</scope>
</reference>
<evidence type="ECO:0000255" key="1"/>
<evidence type="ECO:0000255" key="2">
    <source>
        <dbReference type="PROSITE-ProRule" id="PRU00604"/>
    </source>
</evidence>
<evidence type="ECO:0000269" key="3">
    <source>
    </source>
</evidence>
<evidence type="ECO:0000269" key="4">
    <source>
    </source>
</evidence>
<evidence type="ECO:0000269" key="5">
    <source>
    </source>
</evidence>
<evidence type="ECO:0000269" key="6">
    <source>
    </source>
</evidence>
<evidence type="ECO:0000269" key="7">
    <source>
    </source>
</evidence>
<evidence type="ECO:0000269" key="8">
    <source ref="4"/>
</evidence>
<evidence type="ECO:0000305" key="9"/>
<organism>
    <name type="scientific">Solanum lycopersicum</name>
    <name type="common">Tomato</name>
    <name type="synonym">Lycopersicon esculentum</name>
    <dbReference type="NCBI Taxonomy" id="4081"/>
    <lineage>
        <taxon>Eukaryota</taxon>
        <taxon>Viridiplantae</taxon>
        <taxon>Streptophyta</taxon>
        <taxon>Embryophyta</taxon>
        <taxon>Tracheophyta</taxon>
        <taxon>Spermatophyta</taxon>
        <taxon>Magnoliopsida</taxon>
        <taxon>eudicotyledons</taxon>
        <taxon>Gunneridae</taxon>
        <taxon>Pentapetalae</taxon>
        <taxon>asterids</taxon>
        <taxon>lamiids</taxon>
        <taxon>Solanales</taxon>
        <taxon>Solanaceae</taxon>
        <taxon>Solanoideae</taxon>
        <taxon>Solaneae</taxon>
        <taxon>Solanum</taxon>
        <taxon>Solanum subgen. Lycopersicon</taxon>
    </lineage>
</organism>
<accession>Q40161</accession>
<accession>O04735</accession>
<feature type="signal peptide" evidence="1">
    <location>
        <begin position="1"/>
        <end position="27"/>
    </location>
</feature>
<feature type="propeptide" id="PRO_0000042959" evidence="5">
    <location>
        <begin position="28"/>
        <end position="108"/>
    </location>
</feature>
<feature type="chain" id="PRO_0000042960" description="Polygalacturonase-1 non-catalytic subunit beta">
    <location>
        <begin position="109"/>
        <end position="397" status="uncertain"/>
    </location>
</feature>
<feature type="propeptide" id="PRO_0000042961">
    <location>
        <begin position="398" status="uncertain"/>
        <end position="630"/>
    </location>
</feature>
<feature type="domain" description="BURP" evidence="2">
    <location>
        <begin position="415"/>
        <end position="629"/>
    </location>
</feature>
<feature type="glycosylation site" description="N-linked (GlcNAc...) asparagine" evidence="1">
    <location>
        <position position="124"/>
    </location>
</feature>
<feature type="glycosylation site" description="N-linked (GlcNAc...) asparagine" evidence="1">
    <location>
        <position position="142"/>
    </location>
</feature>
<feature type="glycosylation site" description="N-linked (GlcNAc...) asparagine" evidence="1">
    <location>
        <position position="256"/>
    </location>
</feature>
<feature type="glycosylation site" description="N-linked (GlcNAc...) asparagine" evidence="1">
    <location>
        <position position="334"/>
    </location>
</feature>
<feature type="glycosylation site" description="N-linked (GlcNAc...) asparagine" evidence="1">
    <location>
        <position position="369"/>
    </location>
</feature>
<feature type="glycosylation site" description="N-linked (GlcNAc...) asparagine" evidence="1">
    <location>
        <position position="387"/>
    </location>
</feature>
<feature type="sequence conflict" description="In Ref. 1; AA sequence." evidence="9" ref="1">
    <original>E</original>
    <variation>Q</variation>
    <location>
        <position position="250"/>
    </location>
</feature>
<sequence length="630" mass="68960">MHTKIHLPPCILLLLLFSLPSFNVVVGGDGESGNPFTPKGYLIRYWKKQISNDLPKPWFLLNKASPLNAAQYATYTKLVADQNALTTQLHTFCSSANLMCAPDLSPSLEKHSGDIHFATYSDKNFTNYGTNEPGIGVNTFKNYSEGENIPVNSFRRYGRGSPRDNKFDNYASDGNVIDQSFNSYSTSTAGGSGKFTNYAANANDPNLHFTSYSDQGTGGVQKFTIYSQEANAGDQYFKSYGKNGNGANGEFVSYGNDTNVIGSTFTNYGQTANGGDQKFTSYGFNGNVPENHFTNYGAGGNGPSETFNSYRDQSNVGDDTFTTYVKDANGGEANFTNYGQSFNEGTDVFTTYGKGGNDPHINFKTYGVNNTFKDYVKDTATFSNYHNKTSQVLASLMEVNGGKKVNNRWVEPGKFFREKMLKSGTIMPMPDIKDKMPKRSFLPRVIASKLPFSTSKIAELKKIFHAGDESQVEKMIGDALSECERAPSAGETKRCVNSAEDMIDFATSVLGRNVVVRTTEDTKGSNGNIMIGSVKGINGGKVTKSVSCHQTLYPYLLYYCHSVPKVRVYEADILDPNSKVKINHGVAICHVDTSSWGPSHGAFVALGSGPGKIEVCHWIFENDMTWAIAD</sequence>
<keyword id="KW-0052">Apoplast</keyword>
<keyword id="KW-0134">Cell wall</keyword>
<keyword id="KW-0961">Cell wall biogenesis/degradation</keyword>
<keyword id="KW-0903">Direct protein sequencing</keyword>
<keyword id="KW-0292">Fruit ripening</keyword>
<keyword id="KW-0325">Glycoprotein</keyword>
<keyword id="KW-1185">Reference proteome</keyword>
<keyword id="KW-0964">Secreted</keyword>
<keyword id="KW-0732">Signal</keyword>
<proteinExistence type="evidence at protein level"/>
<gene>
    <name type="primary">GP1</name>
</gene>
<dbReference type="EMBL" id="M98466">
    <property type="protein sequence ID" value="AAA34181.1"/>
    <property type="molecule type" value="mRNA"/>
</dbReference>
<dbReference type="EMBL" id="U63374">
    <property type="protein sequence ID" value="AAB39547.1"/>
    <property type="molecule type" value="Genomic_DNA"/>
</dbReference>
<dbReference type="PIR" id="JQ1670">
    <property type="entry name" value="JQ1670"/>
</dbReference>
<dbReference type="RefSeq" id="NP_001234835.1">
    <property type="nucleotide sequence ID" value="NM_001247906.1"/>
</dbReference>
<dbReference type="SMR" id="Q40161"/>
<dbReference type="FunCoup" id="Q40161">
    <property type="interactions" value="734"/>
</dbReference>
<dbReference type="STRING" id="4081.Q40161"/>
<dbReference type="GlyCosmos" id="Q40161">
    <property type="glycosylation" value="6 sites, No reported glycans"/>
</dbReference>
<dbReference type="PaxDb" id="4081-Solyc05g005560.2.1"/>
<dbReference type="GeneID" id="543991"/>
<dbReference type="KEGG" id="sly:543991"/>
<dbReference type="eggNOG" id="ENOG502QT2V">
    <property type="taxonomic scope" value="Eukaryota"/>
</dbReference>
<dbReference type="HOGENOM" id="CLU_011822_5_0_1"/>
<dbReference type="InParanoid" id="Q40161"/>
<dbReference type="OrthoDB" id="773062at2759"/>
<dbReference type="PhylomeDB" id="Q40161"/>
<dbReference type="BioCyc" id="MetaCyc:MONOMER-2524"/>
<dbReference type="Proteomes" id="UP000004994">
    <property type="component" value="Unplaced"/>
</dbReference>
<dbReference type="ExpressionAtlas" id="Q40161">
    <property type="expression patterns" value="baseline and differential"/>
</dbReference>
<dbReference type="GO" id="GO:0048046">
    <property type="term" value="C:apoplast"/>
    <property type="evidence" value="ECO:0007669"/>
    <property type="project" value="UniProtKB-SubCell"/>
</dbReference>
<dbReference type="GO" id="GO:0071555">
    <property type="term" value="P:cell wall organization"/>
    <property type="evidence" value="ECO:0007669"/>
    <property type="project" value="UniProtKB-KW"/>
</dbReference>
<dbReference type="GO" id="GO:0009835">
    <property type="term" value="P:fruit ripening"/>
    <property type="evidence" value="ECO:0007669"/>
    <property type="project" value="UniProtKB-KW"/>
</dbReference>
<dbReference type="InterPro" id="IPR004873">
    <property type="entry name" value="BURP_dom"/>
</dbReference>
<dbReference type="InterPro" id="IPR051897">
    <property type="entry name" value="PG-associated_BURP"/>
</dbReference>
<dbReference type="PANTHER" id="PTHR31458">
    <property type="entry name" value="POLYGALACTURONASE 1 BETA-LIKE PROTEIN 2"/>
    <property type="match status" value="1"/>
</dbReference>
<dbReference type="PANTHER" id="PTHR31458:SF2">
    <property type="entry name" value="POLYGALACTURONASE 1 BETA-LIKE PROTEIN 2"/>
    <property type="match status" value="1"/>
</dbReference>
<dbReference type="Pfam" id="PF03181">
    <property type="entry name" value="BURP"/>
    <property type="match status" value="1"/>
</dbReference>
<dbReference type="SMART" id="SM01045">
    <property type="entry name" value="BURP"/>
    <property type="match status" value="1"/>
</dbReference>
<dbReference type="PROSITE" id="PS51277">
    <property type="entry name" value="BURP"/>
    <property type="match status" value="1"/>
</dbReference>